<keyword id="KW-0998">Cell outer membrane</keyword>
<keyword id="KW-0472">Membrane</keyword>
<keyword id="KW-1185">Reference proteome</keyword>
<keyword id="KW-0677">Repeat</keyword>
<keyword id="KW-0732">Signal</keyword>
<keyword id="KW-0812">Transmembrane</keyword>
<keyword id="KW-1134">Transmembrane beta strand</keyword>
<reference key="1">
    <citation type="journal article" date="2003" name="Nat. Biotechnol.">
        <title>The genome sequence of the entomopathogenic bacterium Photorhabdus luminescens.</title>
        <authorList>
            <person name="Duchaud E."/>
            <person name="Rusniok C."/>
            <person name="Frangeul L."/>
            <person name="Buchrieser C."/>
            <person name="Givaudan A."/>
            <person name="Taourit S."/>
            <person name="Bocs S."/>
            <person name="Boursaux-Eude C."/>
            <person name="Chandler M."/>
            <person name="Charles J.-F."/>
            <person name="Dassa E."/>
            <person name="Derose R."/>
            <person name="Derzelle S."/>
            <person name="Freyssinet G."/>
            <person name="Gaudriault S."/>
            <person name="Medigue C."/>
            <person name="Lanois A."/>
            <person name="Powell K."/>
            <person name="Siguier P."/>
            <person name="Vincent R."/>
            <person name="Wingate V."/>
            <person name="Zouine M."/>
            <person name="Glaser P."/>
            <person name="Boemare N."/>
            <person name="Danchin A."/>
            <person name="Kunst F."/>
        </authorList>
    </citation>
    <scope>NUCLEOTIDE SEQUENCE [LARGE SCALE GENOMIC DNA]</scope>
    <source>
        <strain>DSM 15139 / CIP 105565 / TT01</strain>
    </source>
</reference>
<comment type="function">
    <text evidence="1">Part of the outer membrane protein assembly complex, which is involved in assembly and insertion of beta-barrel proteins into the outer membrane. Constitutes, with BamD, the core component of the assembly machinery.</text>
</comment>
<comment type="subunit">
    <text evidence="1">Part of the Bam complex, which is composed of the outer membrane protein BamA, and four lipoproteins BamB, BamC, BamD and BamE.</text>
</comment>
<comment type="subcellular location">
    <subcellularLocation>
        <location evidence="1">Cell outer membrane</location>
    </subcellularLocation>
</comment>
<comment type="similarity">
    <text evidence="1">Belongs to the BamA family.</text>
</comment>
<name>BAMA_PHOLL</name>
<sequence length="797" mass="88619">MAMKKLLIASLLFGSATAYGADGFVVQDIHFEGLQRVAVGAALLNMPVRVGDTVSDEDIGRTIHALFATGNFEDVRVLRDSNTLIVQVKERPTIASITFSGNKSVKDDMLKQNLEASHVRIGEALDRTMLSNIERGLEDFYYSVGKYNASVKAVVTPLPRNRVDLKLVFAEGVSAKIQQINIVGNKSFSSDELLNRFQLRDDVPWWNLTADQKYQKQKLTGDLEALRSFYLDRGYARFNIDSTQVSLTPDKKGIYVTINITEGDQYKISGIDLNGNMAGYQSEITKLAAIEPGSLYNGTQVTKMENDIKNLLGRYGYAYPRVMTQPEINDQGKTVKLHVNIDAGNRFYVRKIRFSGNDTTKDSVLRREMRQMERAWLGSDLIELGKERLNRLGYFETVDVETQRVPGSPDQVDVVYKVKERNTGSLNFGVGFGTESGVSFQIGAQQDNWLGTGNSVGVNASKNDYSTYAELSFTDPYFTVNGVSLGGRVFYNDFRADDAELSGYTNQSYGIDGFLGFPINENNSLRFGLNYVHNSLSDMLPQAAMWRYLNSMGEKPDYKSKAEFKADDFALNVGWTYNNLDRGFFPTSGVKSTLNGKVTIPGSDNEFYKVTFDTSAYYPINDDRTWVILGRSRLGYGDGLGGKELPFYENFYAGGSSTVRGFRSNNIGPKAIYMNGKDDPKKDSPSRDAVGGNAMAVASLELITPTPFLDSKYSNSVRTSFFIDSGTVWDTYWNDSAAMKGSGIPDYGKPGNIRVSAGIALQWVSPLGPLVFSYAKPIKDYEGDRSEQFQFNIGKTW</sequence>
<dbReference type="EMBL" id="BX571861">
    <property type="protein sequence ID" value="CAE12975.1"/>
    <property type="molecule type" value="Genomic_DNA"/>
</dbReference>
<dbReference type="RefSeq" id="WP_011145056.1">
    <property type="nucleotide sequence ID" value="NC_005126.1"/>
</dbReference>
<dbReference type="SMR" id="Q7N8N9"/>
<dbReference type="STRING" id="243265.plu0680"/>
<dbReference type="GeneID" id="48846969"/>
<dbReference type="KEGG" id="plu:plu0680"/>
<dbReference type="eggNOG" id="COG4775">
    <property type="taxonomic scope" value="Bacteria"/>
</dbReference>
<dbReference type="HOGENOM" id="CLU_007664_1_0_6"/>
<dbReference type="OrthoDB" id="9803054at2"/>
<dbReference type="Proteomes" id="UP000002514">
    <property type="component" value="Chromosome"/>
</dbReference>
<dbReference type="GO" id="GO:1990063">
    <property type="term" value="C:Bam protein complex"/>
    <property type="evidence" value="ECO:0007669"/>
    <property type="project" value="TreeGrafter"/>
</dbReference>
<dbReference type="GO" id="GO:0043165">
    <property type="term" value="P:Gram-negative-bacterium-type cell outer membrane assembly"/>
    <property type="evidence" value="ECO:0007669"/>
    <property type="project" value="UniProtKB-UniRule"/>
</dbReference>
<dbReference type="GO" id="GO:0051205">
    <property type="term" value="P:protein insertion into membrane"/>
    <property type="evidence" value="ECO:0007669"/>
    <property type="project" value="UniProtKB-UniRule"/>
</dbReference>
<dbReference type="FunFam" id="2.40.160.50:FF:000001">
    <property type="entry name" value="Outer membrane protein assembly factor BamA"/>
    <property type="match status" value="1"/>
</dbReference>
<dbReference type="FunFam" id="3.10.20.310:FF:000001">
    <property type="entry name" value="Outer membrane protein assembly factor BamA"/>
    <property type="match status" value="1"/>
</dbReference>
<dbReference type="FunFam" id="3.10.20.310:FF:000002">
    <property type="entry name" value="Outer membrane protein assembly factor BamA"/>
    <property type="match status" value="1"/>
</dbReference>
<dbReference type="FunFam" id="3.10.20.310:FF:000003">
    <property type="entry name" value="Outer membrane protein assembly factor BamA"/>
    <property type="match status" value="1"/>
</dbReference>
<dbReference type="FunFam" id="3.10.20.310:FF:000004">
    <property type="entry name" value="Outer membrane protein assembly factor BamA"/>
    <property type="match status" value="1"/>
</dbReference>
<dbReference type="FunFam" id="3.10.20.310:FF:000005">
    <property type="entry name" value="Outer membrane protein assembly factor BamA"/>
    <property type="match status" value="1"/>
</dbReference>
<dbReference type="Gene3D" id="3.10.20.310">
    <property type="entry name" value="membrane protein fhac"/>
    <property type="match status" value="5"/>
</dbReference>
<dbReference type="Gene3D" id="2.40.160.50">
    <property type="entry name" value="membrane protein fhac: a member of the omp85/tpsb transporter family"/>
    <property type="match status" value="1"/>
</dbReference>
<dbReference type="HAMAP" id="MF_01430">
    <property type="entry name" value="OM_assembly_BamA"/>
    <property type="match status" value="1"/>
</dbReference>
<dbReference type="InterPro" id="IPR000184">
    <property type="entry name" value="Bac_surfAg_D15"/>
</dbReference>
<dbReference type="InterPro" id="IPR010827">
    <property type="entry name" value="BamA/TamA_POTRA"/>
</dbReference>
<dbReference type="InterPro" id="IPR039910">
    <property type="entry name" value="D15-like"/>
</dbReference>
<dbReference type="InterPro" id="IPR023707">
    <property type="entry name" value="OM_assembly_BamA"/>
</dbReference>
<dbReference type="InterPro" id="IPR034746">
    <property type="entry name" value="POTRA"/>
</dbReference>
<dbReference type="NCBIfam" id="TIGR03303">
    <property type="entry name" value="OM_YaeT"/>
    <property type="match status" value="1"/>
</dbReference>
<dbReference type="NCBIfam" id="NF008287">
    <property type="entry name" value="PRK11067.1"/>
    <property type="match status" value="1"/>
</dbReference>
<dbReference type="PANTHER" id="PTHR12815:SF23">
    <property type="entry name" value="OUTER MEMBRANE PROTEIN ASSEMBLY FACTOR BAMA"/>
    <property type="match status" value="1"/>
</dbReference>
<dbReference type="PANTHER" id="PTHR12815">
    <property type="entry name" value="SORTING AND ASSEMBLY MACHINERY SAMM50 PROTEIN FAMILY MEMBER"/>
    <property type="match status" value="1"/>
</dbReference>
<dbReference type="Pfam" id="PF01103">
    <property type="entry name" value="Omp85"/>
    <property type="match status" value="1"/>
</dbReference>
<dbReference type="Pfam" id="PF07244">
    <property type="entry name" value="POTRA"/>
    <property type="match status" value="4"/>
</dbReference>
<dbReference type="PIRSF" id="PIRSF006076">
    <property type="entry name" value="OM_assembly_OMP85"/>
    <property type="match status" value="1"/>
</dbReference>
<dbReference type="PROSITE" id="PS51779">
    <property type="entry name" value="POTRA"/>
    <property type="match status" value="5"/>
</dbReference>
<evidence type="ECO:0000255" key="1">
    <source>
        <dbReference type="HAMAP-Rule" id="MF_01430"/>
    </source>
</evidence>
<evidence type="ECO:0000255" key="2">
    <source>
        <dbReference type="PROSITE-ProRule" id="PRU01115"/>
    </source>
</evidence>
<organism>
    <name type="scientific">Photorhabdus laumondii subsp. laumondii (strain DSM 15139 / CIP 105565 / TT01)</name>
    <name type="common">Photorhabdus luminescens subsp. laumondii</name>
    <dbReference type="NCBI Taxonomy" id="243265"/>
    <lineage>
        <taxon>Bacteria</taxon>
        <taxon>Pseudomonadati</taxon>
        <taxon>Pseudomonadota</taxon>
        <taxon>Gammaproteobacteria</taxon>
        <taxon>Enterobacterales</taxon>
        <taxon>Morganellaceae</taxon>
        <taxon>Photorhabdus</taxon>
    </lineage>
</organism>
<proteinExistence type="inferred from homology"/>
<accession>Q7N8N9</accession>
<gene>
    <name evidence="1" type="primary">bamA</name>
    <name type="synonym">yaeT</name>
    <name type="ordered locus">plu0680</name>
</gene>
<protein>
    <recommendedName>
        <fullName evidence="1">Outer membrane protein assembly factor BamA</fullName>
    </recommendedName>
</protein>
<feature type="signal peptide" evidence="1">
    <location>
        <begin position="1"/>
        <end position="20"/>
    </location>
</feature>
<feature type="chain" id="PRO_0000045372" description="Outer membrane protein assembly factor BamA">
    <location>
        <begin position="21"/>
        <end position="797"/>
    </location>
</feature>
<feature type="domain" description="POTRA 1" evidence="2">
    <location>
        <begin position="24"/>
        <end position="91"/>
    </location>
</feature>
<feature type="domain" description="POTRA 2" evidence="2">
    <location>
        <begin position="92"/>
        <end position="172"/>
    </location>
</feature>
<feature type="domain" description="POTRA 3" evidence="2">
    <location>
        <begin position="175"/>
        <end position="263"/>
    </location>
</feature>
<feature type="domain" description="POTRA 4" evidence="2">
    <location>
        <begin position="266"/>
        <end position="344"/>
    </location>
</feature>
<feature type="domain" description="POTRA 5" evidence="2">
    <location>
        <begin position="347"/>
        <end position="421"/>
    </location>
</feature>